<evidence type="ECO:0000255" key="1">
    <source>
        <dbReference type="HAMAP-Rule" id="MF_00059"/>
    </source>
</evidence>
<name>RPOA_BURM7</name>
<dbReference type="EC" id="2.7.7.6" evidence="1"/>
<dbReference type="EMBL" id="CP000548">
    <property type="protein sequence ID" value="ABO05987.1"/>
    <property type="molecule type" value="Genomic_DNA"/>
</dbReference>
<dbReference type="RefSeq" id="WP_004197925.1">
    <property type="nucleotide sequence ID" value="NZ_CP007802.1"/>
</dbReference>
<dbReference type="SMR" id="A3MRY0"/>
<dbReference type="GeneID" id="93061806"/>
<dbReference type="KEGG" id="bmaz:BM44_3015"/>
<dbReference type="KEGG" id="bmn:BMA10247_3504"/>
<dbReference type="PATRIC" id="fig|320389.8.peg.3387"/>
<dbReference type="GO" id="GO:0005737">
    <property type="term" value="C:cytoplasm"/>
    <property type="evidence" value="ECO:0007669"/>
    <property type="project" value="UniProtKB-ARBA"/>
</dbReference>
<dbReference type="GO" id="GO:0000428">
    <property type="term" value="C:DNA-directed RNA polymerase complex"/>
    <property type="evidence" value="ECO:0007669"/>
    <property type="project" value="UniProtKB-KW"/>
</dbReference>
<dbReference type="GO" id="GO:0003677">
    <property type="term" value="F:DNA binding"/>
    <property type="evidence" value="ECO:0007669"/>
    <property type="project" value="UniProtKB-UniRule"/>
</dbReference>
<dbReference type="GO" id="GO:0003899">
    <property type="term" value="F:DNA-directed RNA polymerase activity"/>
    <property type="evidence" value="ECO:0007669"/>
    <property type="project" value="UniProtKB-UniRule"/>
</dbReference>
<dbReference type="GO" id="GO:0046983">
    <property type="term" value="F:protein dimerization activity"/>
    <property type="evidence" value="ECO:0007669"/>
    <property type="project" value="InterPro"/>
</dbReference>
<dbReference type="GO" id="GO:0006351">
    <property type="term" value="P:DNA-templated transcription"/>
    <property type="evidence" value="ECO:0007669"/>
    <property type="project" value="UniProtKB-UniRule"/>
</dbReference>
<dbReference type="CDD" id="cd06928">
    <property type="entry name" value="RNAP_alpha_NTD"/>
    <property type="match status" value="1"/>
</dbReference>
<dbReference type="FunFam" id="1.10.150.20:FF:000001">
    <property type="entry name" value="DNA-directed RNA polymerase subunit alpha"/>
    <property type="match status" value="1"/>
</dbReference>
<dbReference type="FunFam" id="2.170.120.12:FF:000001">
    <property type="entry name" value="DNA-directed RNA polymerase subunit alpha"/>
    <property type="match status" value="1"/>
</dbReference>
<dbReference type="Gene3D" id="1.10.150.20">
    <property type="entry name" value="5' to 3' exonuclease, C-terminal subdomain"/>
    <property type="match status" value="1"/>
</dbReference>
<dbReference type="Gene3D" id="2.170.120.12">
    <property type="entry name" value="DNA-directed RNA polymerase, insert domain"/>
    <property type="match status" value="1"/>
</dbReference>
<dbReference type="Gene3D" id="3.30.1360.10">
    <property type="entry name" value="RNA polymerase, RBP11-like subunit"/>
    <property type="match status" value="1"/>
</dbReference>
<dbReference type="HAMAP" id="MF_00059">
    <property type="entry name" value="RNApol_bact_RpoA"/>
    <property type="match status" value="1"/>
</dbReference>
<dbReference type="InterPro" id="IPR011262">
    <property type="entry name" value="DNA-dir_RNA_pol_insert"/>
</dbReference>
<dbReference type="InterPro" id="IPR011263">
    <property type="entry name" value="DNA-dir_RNA_pol_RpoA/D/Rpb3"/>
</dbReference>
<dbReference type="InterPro" id="IPR011773">
    <property type="entry name" value="DNA-dir_RpoA"/>
</dbReference>
<dbReference type="InterPro" id="IPR036603">
    <property type="entry name" value="RBP11-like"/>
</dbReference>
<dbReference type="InterPro" id="IPR011260">
    <property type="entry name" value="RNAP_asu_C"/>
</dbReference>
<dbReference type="InterPro" id="IPR036643">
    <property type="entry name" value="RNApol_insert_sf"/>
</dbReference>
<dbReference type="NCBIfam" id="NF003513">
    <property type="entry name" value="PRK05182.1-2"/>
    <property type="match status" value="1"/>
</dbReference>
<dbReference type="NCBIfam" id="NF003519">
    <property type="entry name" value="PRK05182.2-5"/>
    <property type="match status" value="1"/>
</dbReference>
<dbReference type="NCBIfam" id="TIGR02027">
    <property type="entry name" value="rpoA"/>
    <property type="match status" value="1"/>
</dbReference>
<dbReference type="Pfam" id="PF01000">
    <property type="entry name" value="RNA_pol_A_bac"/>
    <property type="match status" value="1"/>
</dbReference>
<dbReference type="Pfam" id="PF03118">
    <property type="entry name" value="RNA_pol_A_CTD"/>
    <property type="match status" value="1"/>
</dbReference>
<dbReference type="Pfam" id="PF01193">
    <property type="entry name" value="RNA_pol_L"/>
    <property type="match status" value="1"/>
</dbReference>
<dbReference type="SMART" id="SM00662">
    <property type="entry name" value="RPOLD"/>
    <property type="match status" value="1"/>
</dbReference>
<dbReference type="SUPFAM" id="SSF47789">
    <property type="entry name" value="C-terminal domain of RNA polymerase alpha subunit"/>
    <property type="match status" value="1"/>
</dbReference>
<dbReference type="SUPFAM" id="SSF56553">
    <property type="entry name" value="Insert subdomain of RNA polymerase alpha subunit"/>
    <property type="match status" value="1"/>
</dbReference>
<dbReference type="SUPFAM" id="SSF55257">
    <property type="entry name" value="RBP11-like subunits of RNA polymerase"/>
    <property type="match status" value="1"/>
</dbReference>
<sequence length="325" mass="35685">MQTSLLKPKIIAVESLGENHAKVVMEPFERGYGHTLGNALRRVLLSSMVGYAPTEVTIAGVVHEYSTLDGVQEDVVNLLLNLKGVVFKLHNRDEVTVTLRKEGEGVVTAGDIELAHDCEVINPNHVIAHLSKGGKLDVQIKVEKGRGYVPGNVRRYGDETAKIIGRIVLDASFSPVRRVSYTVESARVEQRTDLDKLVMNIETSGVITPEEAIRQSARILVDQLSVFAALEGTETAAEAPSRAPQIDPILLRPVDDLELTVRSANCLKAENIYYIGDLIQRTENELLKTPNLGRKSLNEIKEVLASRGLTLGMKLENWPPAGLDK</sequence>
<accession>A3MRY0</accession>
<keyword id="KW-0240">DNA-directed RNA polymerase</keyword>
<keyword id="KW-0548">Nucleotidyltransferase</keyword>
<keyword id="KW-0804">Transcription</keyword>
<keyword id="KW-0808">Transferase</keyword>
<proteinExistence type="inferred from homology"/>
<organism>
    <name type="scientific">Burkholderia mallei (strain NCTC 10247)</name>
    <dbReference type="NCBI Taxonomy" id="320389"/>
    <lineage>
        <taxon>Bacteria</taxon>
        <taxon>Pseudomonadati</taxon>
        <taxon>Pseudomonadota</taxon>
        <taxon>Betaproteobacteria</taxon>
        <taxon>Burkholderiales</taxon>
        <taxon>Burkholderiaceae</taxon>
        <taxon>Burkholderia</taxon>
        <taxon>pseudomallei group</taxon>
    </lineage>
</organism>
<reference key="1">
    <citation type="journal article" date="2010" name="Genome Biol. Evol.">
        <title>Continuing evolution of Burkholderia mallei through genome reduction and large-scale rearrangements.</title>
        <authorList>
            <person name="Losada L."/>
            <person name="Ronning C.M."/>
            <person name="DeShazer D."/>
            <person name="Woods D."/>
            <person name="Fedorova N."/>
            <person name="Kim H.S."/>
            <person name="Shabalina S.A."/>
            <person name="Pearson T.R."/>
            <person name="Brinkac L."/>
            <person name="Tan P."/>
            <person name="Nandi T."/>
            <person name="Crabtree J."/>
            <person name="Badger J."/>
            <person name="Beckstrom-Sternberg S."/>
            <person name="Saqib M."/>
            <person name="Schutzer S.E."/>
            <person name="Keim P."/>
            <person name="Nierman W.C."/>
        </authorList>
    </citation>
    <scope>NUCLEOTIDE SEQUENCE [LARGE SCALE GENOMIC DNA]</scope>
    <source>
        <strain>NCTC 10247</strain>
    </source>
</reference>
<comment type="function">
    <text evidence="1">DNA-dependent RNA polymerase catalyzes the transcription of DNA into RNA using the four ribonucleoside triphosphates as substrates.</text>
</comment>
<comment type="catalytic activity">
    <reaction evidence="1">
        <text>RNA(n) + a ribonucleoside 5'-triphosphate = RNA(n+1) + diphosphate</text>
        <dbReference type="Rhea" id="RHEA:21248"/>
        <dbReference type="Rhea" id="RHEA-COMP:14527"/>
        <dbReference type="Rhea" id="RHEA-COMP:17342"/>
        <dbReference type="ChEBI" id="CHEBI:33019"/>
        <dbReference type="ChEBI" id="CHEBI:61557"/>
        <dbReference type="ChEBI" id="CHEBI:140395"/>
        <dbReference type="EC" id="2.7.7.6"/>
    </reaction>
</comment>
<comment type="subunit">
    <text evidence="1">Homodimer. The RNAP catalytic core consists of 2 alpha, 1 beta, 1 beta' and 1 omega subunit. When a sigma factor is associated with the core the holoenzyme is formed, which can initiate transcription.</text>
</comment>
<comment type="domain">
    <text evidence="1">The N-terminal domain is essential for RNAP assembly and basal transcription, whereas the C-terminal domain is involved in interaction with transcriptional regulators and with upstream promoter elements.</text>
</comment>
<comment type="similarity">
    <text evidence="1">Belongs to the RNA polymerase alpha chain family.</text>
</comment>
<gene>
    <name evidence="1" type="primary">rpoA</name>
    <name type="ordered locus">BMA10247_3504</name>
</gene>
<feature type="chain" id="PRO_1000007676" description="DNA-directed RNA polymerase subunit alpha">
    <location>
        <begin position="1"/>
        <end position="325"/>
    </location>
</feature>
<feature type="region of interest" description="Alpha N-terminal domain (alpha-NTD)" evidence="1">
    <location>
        <begin position="1"/>
        <end position="231"/>
    </location>
</feature>
<feature type="region of interest" description="Alpha C-terminal domain (alpha-CTD)" evidence="1">
    <location>
        <begin position="246"/>
        <end position="325"/>
    </location>
</feature>
<protein>
    <recommendedName>
        <fullName evidence="1">DNA-directed RNA polymerase subunit alpha</fullName>
        <shortName evidence="1">RNAP subunit alpha</shortName>
        <ecNumber evidence="1">2.7.7.6</ecNumber>
    </recommendedName>
    <alternativeName>
        <fullName evidence="1">RNA polymerase subunit alpha</fullName>
    </alternativeName>
    <alternativeName>
        <fullName evidence="1">Transcriptase subunit alpha</fullName>
    </alternativeName>
</protein>